<comment type="function">
    <text evidence="1">This protein is located at the 30S-50S ribosomal subunit interface and may play a role in the structure and function of the aminoacyl-tRNA binding site.</text>
</comment>
<comment type="similarity">
    <text evidence="1">Belongs to the bacterial ribosomal protein bL19 family.</text>
</comment>
<dbReference type="EMBL" id="CR522870">
    <property type="protein sequence ID" value="CAG37534.1"/>
    <property type="molecule type" value="Genomic_DNA"/>
</dbReference>
<dbReference type="RefSeq" id="WP_011190046.1">
    <property type="nucleotide sequence ID" value="NC_006138.1"/>
</dbReference>
<dbReference type="SMR" id="Q6AJE6"/>
<dbReference type="STRING" id="177439.DP2805"/>
<dbReference type="KEGG" id="dps:DP2805"/>
<dbReference type="eggNOG" id="COG0335">
    <property type="taxonomic scope" value="Bacteria"/>
</dbReference>
<dbReference type="HOGENOM" id="CLU_103507_2_1_7"/>
<dbReference type="OrthoDB" id="9803541at2"/>
<dbReference type="Proteomes" id="UP000000602">
    <property type="component" value="Chromosome"/>
</dbReference>
<dbReference type="GO" id="GO:0022625">
    <property type="term" value="C:cytosolic large ribosomal subunit"/>
    <property type="evidence" value="ECO:0007669"/>
    <property type="project" value="TreeGrafter"/>
</dbReference>
<dbReference type="GO" id="GO:0003735">
    <property type="term" value="F:structural constituent of ribosome"/>
    <property type="evidence" value="ECO:0007669"/>
    <property type="project" value="InterPro"/>
</dbReference>
<dbReference type="GO" id="GO:0006412">
    <property type="term" value="P:translation"/>
    <property type="evidence" value="ECO:0007669"/>
    <property type="project" value="UniProtKB-UniRule"/>
</dbReference>
<dbReference type="FunFam" id="2.30.30.790:FF:000001">
    <property type="entry name" value="50S ribosomal protein L19"/>
    <property type="match status" value="1"/>
</dbReference>
<dbReference type="Gene3D" id="2.30.30.790">
    <property type="match status" value="1"/>
</dbReference>
<dbReference type="HAMAP" id="MF_00402">
    <property type="entry name" value="Ribosomal_bL19"/>
    <property type="match status" value="1"/>
</dbReference>
<dbReference type="InterPro" id="IPR001857">
    <property type="entry name" value="Ribosomal_bL19"/>
</dbReference>
<dbReference type="InterPro" id="IPR018257">
    <property type="entry name" value="Ribosomal_bL19_CS"/>
</dbReference>
<dbReference type="InterPro" id="IPR038657">
    <property type="entry name" value="Ribosomal_bL19_sf"/>
</dbReference>
<dbReference type="InterPro" id="IPR008991">
    <property type="entry name" value="Translation_prot_SH3-like_sf"/>
</dbReference>
<dbReference type="NCBIfam" id="TIGR01024">
    <property type="entry name" value="rplS_bact"/>
    <property type="match status" value="1"/>
</dbReference>
<dbReference type="PANTHER" id="PTHR15680:SF9">
    <property type="entry name" value="LARGE RIBOSOMAL SUBUNIT PROTEIN BL19M"/>
    <property type="match status" value="1"/>
</dbReference>
<dbReference type="PANTHER" id="PTHR15680">
    <property type="entry name" value="RIBOSOMAL PROTEIN L19"/>
    <property type="match status" value="1"/>
</dbReference>
<dbReference type="Pfam" id="PF01245">
    <property type="entry name" value="Ribosomal_L19"/>
    <property type="match status" value="1"/>
</dbReference>
<dbReference type="PIRSF" id="PIRSF002191">
    <property type="entry name" value="Ribosomal_L19"/>
    <property type="match status" value="1"/>
</dbReference>
<dbReference type="PRINTS" id="PR00061">
    <property type="entry name" value="RIBOSOMALL19"/>
</dbReference>
<dbReference type="SUPFAM" id="SSF50104">
    <property type="entry name" value="Translation proteins SH3-like domain"/>
    <property type="match status" value="1"/>
</dbReference>
<dbReference type="PROSITE" id="PS01015">
    <property type="entry name" value="RIBOSOMAL_L19"/>
    <property type="match status" value="1"/>
</dbReference>
<gene>
    <name evidence="1" type="primary">rplS</name>
    <name type="ordered locus">DP2805</name>
</gene>
<name>RL19_DESPS</name>
<keyword id="KW-1185">Reference proteome</keyword>
<keyword id="KW-0687">Ribonucleoprotein</keyword>
<keyword id="KW-0689">Ribosomal protein</keyword>
<protein>
    <recommendedName>
        <fullName evidence="1">Large ribosomal subunit protein bL19</fullName>
    </recommendedName>
    <alternativeName>
        <fullName evidence="2">50S ribosomal protein L19</fullName>
    </alternativeName>
</protein>
<accession>Q6AJE6</accession>
<evidence type="ECO:0000255" key="1">
    <source>
        <dbReference type="HAMAP-Rule" id="MF_00402"/>
    </source>
</evidence>
<evidence type="ECO:0000305" key="2"/>
<sequence length="117" mass="13776">MSIIIDRINQEQMRQDHPDFRPGDTVAVHIRIIEGSKERVQLFQGVVIKRQKGTMDASYTVRKISHGVGVEKTFALHNPRIEKIEVITRGRVRRSRLYYLRDLRGKAARIRERSLRR</sequence>
<feature type="chain" id="PRO_0000163449" description="Large ribosomal subunit protein bL19">
    <location>
        <begin position="1"/>
        <end position="117"/>
    </location>
</feature>
<organism>
    <name type="scientific">Desulfotalea psychrophila (strain LSv54 / DSM 12343)</name>
    <dbReference type="NCBI Taxonomy" id="177439"/>
    <lineage>
        <taxon>Bacteria</taxon>
        <taxon>Pseudomonadati</taxon>
        <taxon>Thermodesulfobacteriota</taxon>
        <taxon>Desulfobulbia</taxon>
        <taxon>Desulfobulbales</taxon>
        <taxon>Desulfocapsaceae</taxon>
        <taxon>Desulfotalea</taxon>
    </lineage>
</organism>
<reference key="1">
    <citation type="journal article" date="2004" name="Environ. Microbiol.">
        <title>The genome of Desulfotalea psychrophila, a sulfate-reducing bacterium from permanently cold Arctic sediments.</title>
        <authorList>
            <person name="Rabus R."/>
            <person name="Ruepp A."/>
            <person name="Frickey T."/>
            <person name="Rattei T."/>
            <person name="Fartmann B."/>
            <person name="Stark M."/>
            <person name="Bauer M."/>
            <person name="Zibat A."/>
            <person name="Lombardot T."/>
            <person name="Becker I."/>
            <person name="Amann J."/>
            <person name="Gellner K."/>
            <person name="Teeling H."/>
            <person name="Leuschner W.D."/>
            <person name="Gloeckner F.-O."/>
            <person name="Lupas A.N."/>
            <person name="Amann R."/>
            <person name="Klenk H.-P."/>
        </authorList>
    </citation>
    <scope>NUCLEOTIDE SEQUENCE [LARGE SCALE GENOMIC DNA]</scope>
    <source>
        <strain>DSM 12343 / LSv54</strain>
    </source>
</reference>
<proteinExistence type="inferred from homology"/>